<protein>
    <recommendedName>
        <fullName>Putative tartrate transporter</fullName>
    </recommendedName>
</protein>
<gene>
    <name type="primary">ttuB</name>
</gene>
<organism>
    <name type="scientific">Agrobacterium vitis</name>
    <name type="common">Rhizobium vitis</name>
    <dbReference type="NCBI Taxonomy" id="373"/>
    <lineage>
        <taxon>Bacteria</taxon>
        <taxon>Pseudomonadati</taxon>
        <taxon>Pseudomonadota</taxon>
        <taxon>Alphaproteobacteria</taxon>
        <taxon>Hyphomicrobiales</taxon>
        <taxon>Rhizobiaceae</taxon>
        <taxon>Rhizobium/Agrobacterium group</taxon>
        <taxon>Agrobacterium</taxon>
    </lineage>
</organism>
<feature type="chain" id="PRO_0000121388" description="Putative tartrate transporter">
    <location>
        <begin position="1"/>
        <end position="449"/>
    </location>
</feature>
<feature type="transmembrane region" description="Helical" evidence="1">
    <location>
        <begin position="34"/>
        <end position="54"/>
    </location>
</feature>
<feature type="transmembrane region" description="Helical" evidence="1">
    <location>
        <begin position="64"/>
        <end position="84"/>
    </location>
</feature>
<feature type="transmembrane region" description="Helical" evidence="1">
    <location>
        <begin position="99"/>
        <end position="119"/>
    </location>
</feature>
<feature type="transmembrane region" description="Helical" evidence="1">
    <location>
        <begin position="130"/>
        <end position="150"/>
    </location>
</feature>
<feature type="transmembrane region" description="Helical" evidence="1">
    <location>
        <begin position="156"/>
        <end position="176"/>
    </location>
</feature>
<feature type="transmembrane region" description="Helical" evidence="1">
    <location>
        <begin position="194"/>
        <end position="214"/>
    </location>
</feature>
<feature type="transmembrane region" description="Helical" evidence="1">
    <location>
        <begin position="259"/>
        <end position="279"/>
    </location>
</feature>
<feature type="transmembrane region" description="Helical" evidence="1">
    <location>
        <begin position="292"/>
        <end position="312"/>
    </location>
</feature>
<feature type="transmembrane region" description="Helical" evidence="1">
    <location>
        <begin position="336"/>
        <end position="356"/>
    </location>
</feature>
<feature type="transmembrane region" description="Helical" evidence="1">
    <location>
        <begin position="367"/>
        <end position="387"/>
    </location>
</feature>
<feature type="transmembrane region" description="Helical" evidence="1">
    <location>
        <begin position="414"/>
        <end position="434"/>
    </location>
</feature>
<accession>P70786</accession>
<sequence>MQAQEVRLLYLFREDGVVTNDLEARVLRKITFRIVPFIMLLYFIAFLDRVNIGFAALTMNQDLGFSSTVFGIGAGIFFVGYFLFEVPSNLILNKVGARIWIARVMITWGIVSGLMAFVQGTTSFYILRFLLGVAEAGFFPGIILYLSFWFPARRRAAVTALFMAAAPLSTVLGSPISGALMEMHGLMGLAGWQWMFLIEAAPALILGVVVLFFLTDRPEKAKWLTEEERNWLVKTMNAEQAGRGTASHSVMAGLADIRVIALALVYFGTSAGLYTLGIWAPQIIKQFGLSAIEVGFINAVPGIFAVVAMVLWARHSDRTGERTWHVVGACLLAAAGLAFAAGATSVFMVLIALTIVNVGISCSKPPLWSMPTMFLSGPAAAAGIATINSIGNLGGFVGPSMIGWIKDTTGSFTGGLYFVAGLLLISAILTLILARSSPKAVETRTANQH</sequence>
<proteinExistence type="evidence at transcript level"/>
<geneLocation type="plasmid">
    <name>pTrAB3</name>
</geneLocation>
<evidence type="ECO:0000255" key="1"/>
<evidence type="ECO:0000305" key="2"/>
<name>TUB3_AGRVI</name>
<keyword id="KW-1003">Cell membrane</keyword>
<keyword id="KW-0472">Membrane</keyword>
<keyword id="KW-0614">Plasmid</keyword>
<keyword id="KW-0812">Transmembrane</keyword>
<keyword id="KW-1133">Transmembrane helix</keyword>
<keyword id="KW-0813">Transport</keyword>
<reference key="1">
    <citation type="journal article" date="1996" name="Mol. Plant Microbe Interact.">
        <title>Characterization and distribution of tartrate utilization genes in the grapevine pathogen Agrobacterium vitis.</title>
        <authorList>
            <person name="Salomone J.-Y."/>
            <person name="Crouzet P."/>
            <person name="de Ruffray P."/>
            <person name="Otten L."/>
        </authorList>
    </citation>
    <scope>NUCLEOTIDE SEQUENCE [GENOMIC DNA]</scope>
    <source>
        <strain>AB3</strain>
    </source>
</reference>
<dbReference type="EMBL" id="U32375">
    <property type="protein sequence ID" value="AAB61622.1"/>
    <property type="molecule type" value="Genomic_DNA"/>
</dbReference>
<dbReference type="RefSeq" id="WP_032488975.1">
    <property type="nucleotide sequence ID" value="NZ_JABAEI010000010.1"/>
</dbReference>
<dbReference type="SMR" id="P70786"/>
<dbReference type="TCDB" id="2.A.1.14.3">
    <property type="family name" value="the major facilitator superfamily (mfs)"/>
</dbReference>
<dbReference type="GO" id="GO:0005886">
    <property type="term" value="C:plasma membrane"/>
    <property type="evidence" value="ECO:0007669"/>
    <property type="project" value="UniProtKB-SubCell"/>
</dbReference>
<dbReference type="GO" id="GO:0022857">
    <property type="term" value="F:transmembrane transporter activity"/>
    <property type="evidence" value="ECO:0007669"/>
    <property type="project" value="InterPro"/>
</dbReference>
<dbReference type="CDD" id="cd17319">
    <property type="entry name" value="MFS_ExuT_GudP_like"/>
    <property type="match status" value="1"/>
</dbReference>
<dbReference type="FunFam" id="1.20.1250.20:FF:000018">
    <property type="entry name" value="MFS transporter permease"/>
    <property type="match status" value="1"/>
</dbReference>
<dbReference type="FunFam" id="1.20.1250.20:FF:000126">
    <property type="entry name" value="MFS transporter permease"/>
    <property type="match status" value="1"/>
</dbReference>
<dbReference type="Gene3D" id="1.20.1250.20">
    <property type="entry name" value="MFS general substrate transporter like domains"/>
    <property type="match status" value="2"/>
</dbReference>
<dbReference type="InterPro" id="IPR011701">
    <property type="entry name" value="MFS"/>
</dbReference>
<dbReference type="InterPro" id="IPR020846">
    <property type="entry name" value="MFS_dom"/>
</dbReference>
<dbReference type="InterPro" id="IPR036259">
    <property type="entry name" value="MFS_trans_sf"/>
</dbReference>
<dbReference type="NCBIfam" id="TIGR00893">
    <property type="entry name" value="2A0114"/>
    <property type="match status" value="1"/>
</dbReference>
<dbReference type="PANTHER" id="PTHR43791">
    <property type="entry name" value="PERMEASE-RELATED"/>
    <property type="match status" value="1"/>
</dbReference>
<dbReference type="PANTHER" id="PTHR43791:SF36">
    <property type="entry name" value="TRANSPORTER, PUTATIVE (AFU_ORTHOLOGUE AFUA_6G08340)-RELATED"/>
    <property type="match status" value="1"/>
</dbReference>
<dbReference type="Pfam" id="PF07690">
    <property type="entry name" value="MFS_1"/>
    <property type="match status" value="1"/>
</dbReference>
<dbReference type="SUPFAM" id="SSF103473">
    <property type="entry name" value="MFS general substrate transporter"/>
    <property type="match status" value="1"/>
</dbReference>
<dbReference type="PROSITE" id="PS50850">
    <property type="entry name" value="MFS"/>
    <property type="match status" value="1"/>
</dbReference>
<comment type="function">
    <text>Component of the tartrate utilization system and may allow entry of tartrate and tartrate dehydrogenase.</text>
</comment>
<comment type="subcellular location">
    <subcellularLocation>
        <location evidence="2">Cell membrane</location>
        <topology evidence="2">Multi-pass membrane protein</topology>
    </subcellularLocation>
</comment>
<comment type="induction">
    <text>By tartrate.</text>
</comment>
<comment type="similarity">
    <text evidence="2">Belongs to the major facilitator superfamily. Phthalate permease family.</text>
</comment>